<name>GLPB_HAEDU</name>
<evidence type="ECO:0000255" key="1">
    <source>
        <dbReference type="HAMAP-Rule" id="MF_00753"/>
    </source>
</evidence>
<accession>Q7VM49</accession>
<protein>
    <recommendedName>
        <fullName evidence="1">Anaerobic glycerol-3-phosphate dehydrogenase subunit B</fullName>
        <shortName evidence="1">Anaerobic G-3-P dehydrogenase subunit B</shortName>
        <shortName evidence="1">Anaerobic G3Pdhase B</shortName>
        <ecNumber evidence="1">1.1.5.3</ecNumber>
    </recommendedName>
</protein>
<keyword id="KW-0285">Flavoprotein</keyword>
<keyword id="KW-0288">FMN</keyword>
<keyword id="KW-0560">Oxidoreductase</keyword>
<keyword id="KW-1185">Reference proteome</keyword>
<comment type="function">
    <text evidence="1">Conversion of glycerol 3-phosphate to dihydroxyacetone. Uses fumarate or nitrate as electron acceptor.</text>
</comment>
<comment type="catalytic activity">
    <reaction evidence="1">
        <text>a quinone + sn-glycerol 3-phosphate = dihydroxyacetone phosphate + a quinol</text>
        <dbReference type="Rhea" id="RHEA:18977"/>
        <dbReference type="ChEBI" id="CHEBI:24646"/>
        <dbReference type="ChEBI" id="CHEBI:57597"/>
        <dbReference type="ChEBI" id="CHEBI:57642"/>
        <dbReference type="ChEBI" id="CHEBI:132124"/>
        <dbReference type="EC" id="1.1.5.3"/>
    </reaction>
</comment>
<comment type="cofactor">
    <cofactor evidence="1">
        <name>FMN</name>
        <dbReference type="ChEBI" id="CHEBI:58210"/>
    </cofactor>
</comment>
<comment type="pathway">
    <text evidence="1">Polyol metabolism; glycerol degradation via glycerol kinase pathway; glycerone phosphate from sn-glycerol 3-phosphate (anaerobic route): step 1/1.</text>
</comment>
<comment type="subunit">
    <text evidence="1">Composed of a catalytic GlpA/B dimer and of membrane bound GlpC.</text>
</comment>
<comment type="similarity">
    <text evidence="1">Belongs to the anaerobic G-3-P dehydrogenase subunit B family.</text>
</comment>
<sequence length="426" mass="46953">MNFDVVIIGGGLAGLTCGIALQKQGKQCAIINNGQAAIDFSSGSMDLLSCLPSGQKVHVFCEAFSELSQQAPEHPYCLLGQHQVVAKVQQFEQFMQELGLVGSHKQNHLRVTPLGGLRHTWLSPKSVPVIAENEHFPYRQIAILGIEGYHDFQPQILVDNLKQNAAFSHCDFSIGYLNIPELDYLRQNAREFRSVNIAQLLEHKLAFEDLVQEIKQAAGNAQAVFLLACFGLDDQRFFDSLKQATALALFELPTLPPSLIGIRQYRTLRDQFEKLGGLLLNGDRAVRAEFDGDRVARIFTTLHQEESINAAHFVLASGSFFSNGLVAEFERVKEPIFDLDIIGNKAFINSERVSWTDKRFAAAQPYQSAGVAINHHCQVYKNGHLIPNLYAIGNVIGGFWGIEQGCASGVSVVTALTVAEWVGGTK</sequence>
<gene>
    <name evidence="1" type="primary">glpB</name>
    <name type="ordered locus">HD_1158</name>
</gene>
<organism>
    <name type="scientific">Haemophilus ducreyi (strain 35000HP / ATCC 700724)</name>
    <dbReference type="NCBI Taxonomy" id="233412"/>
    <lineage>
        <taxon>Bacteria</taxon>
        <taxon>Pseudomonadati</taxon>
        <taxon>Pseudomonadota</taxon>
        <taxon>Gammaproteobacteria</taxon>
        <taxon>Pasteurellales</taxon>
        <taxon>Pasteurellaceae</taxon>
        <taxon>Haemophilus</taxon>
    </lineage>
</organism>
<proteinExistence type="inferred from homology"/>
<reference key="1">
    <citation type="submission" date="2003-06" db="EMBL/GenBank/DDBJ databases">
        <title>The complete genome sequence of Haemophilus ducreyi.</title>
        <authorList>
            <person name="Munson R.S. Jr."/>
            <person name="Ray W.C."/>
            <person name="Mahairas G."/>
            <person name="Sabo P."/>
            <person name="Mungur R."/>
            <person name="Johnson L."/>
            <person name="Nguyen D."/>
            <person name="Wang J."/>
            <person name="Forst C."/>
            <person name="Hood L."/>
        </authorList>
    </citation>
    <scope>NUCLEOTIDE SEQUENCE [LARGE SCALE GENOMIC DNA]</scope>
    <source>
        <strain>35000HP / ATCC 700724</strain>
    </source>
</reference>
<dbReference type="EC" id="1.1.5.3" evidence="1"/>
<dbReference type="EMBL" id="AE017143">
    <property type="protein sequence ID" value="AAP96014.1"/>
    <property type="molecule type" value="Genomic_DNA"/>
</dbReference>
<dbReference type="RefSeq" id="WP_010945063.1">
    <property type="nucleotide sequence ID" value="NC_002940.2"/>
</dbReference>
<dbReference type="STRING" id="233412.HD_1158"/>
<dbReference type="KEGG" id="hdu:HD_1158"/>
<dbReference type="eggNOG" id="COG3075">
    <property type="taxonomic scope" value="Bacteria"/>
</dbReference>
<dbReference type="HOGENOM" id="CLU_047793_0_0_6"/>
<dbReference type="OrthoDB" id="6395323at2"/>
<dbReference type="UniPathway" id="UPA00618">
    <property type="reaction ID" value="UER00673"/>
</dbReference>
<dbReference type="Proteomes" id="UP000001022">
    <property type="component" value="Chromosome"/>
</dbReference>
<dbReference type="GO" id="GO:0009331">
    <property type="term" value="C:glycerol-3-phosphate dehydrogenase (FAD) complex"/>
    <property type="evidence" value="ECO:0007669"/>
    <property type="project" value="InterPro"/>
</dbReference>
<dbReference type="GO" id="GO:0004368">
    <property type="term" value="F:glycerol-3-phosphate dehydrogenase (quinone) activity"/>
    <property type="evidence" value="ECO:0007669"/>
    <property type="project" value="UniProtKB-UniRule"/>
</dbReference>
<dbReference type="GO" id="GO:0019563">
    <property type="term" value="P:glycerol catabolic process"/>
    <property type="evidence" value="ECO:0007669"/>
    <property type="project" value="UniProtKB-UniRule"/>
</dbReference>
<dbReference type="Gene3D" id="3.50.50.60">
    <property type="entry name" value="FAD/NAD(P)-binding domain"/>
    <property type="match status" value="2"/>
</dbReference>
<dbReference type="HAMAP" id="MF_00753">
    <property type="entry name" value="Glycerol3P_GlpB"/>
    <property type="match status" value="1"/>
</dbReference>
<dbReference type="InterPro" id="IPR003953">
    <property type="entry name" value="FAD-dep_OxRdtase_2_FAD-bd"/>
</dbReference>
<dbReference type="InterPro" id="IPR050315">
    <property type="entry name" value="FAD-oxidoreductase_2"/>
</dbReference>
<dbReference type="InterPro" id="IPR036188">
    <property type="entry name" value="FAD/NAD-bd_sf"/>
</dbReference>
<dbReference type="InterPro" id="IPR009158">
    <property type="entry name" value="G3P_DH_GlpB_su"/>
</dbReference>
<dbReference type="NCBIfam" id="TIGR03378">
    <property type="entry name" value="glycerol3P_GlpB"/>
    <property type="match status" value="1"/>
</dbReference>
<dbReference type="NCBIfam" id="NF003718">
    <property type="entry name" value="PRK05329.1-1"/>
    <property type="match status" value="1"/>
</dbReference>
<dbReference type="NCBIfam" id="NF003719">
    <property type="entry name" value="PRK05329.1-2"/>
    <property type="match status" value="1"/>
</dbReference>
<dbReference type="NCBIfam" id="NF003720">
    <property type="entry name" value="PRK05329.1-3"/>
    <property type="match status" value="1"/>
</dbReference>
<dbReference type="NCBIfam" id="NF003721">
    <property type="entry name" value="PRK05329.1-4"/>
    <property type="match status" value="1"/>
</dbReference>
<dbReference type="PANTHER" id="PTHR43400:SF11">
    <property type="entry name" value="ANAEROBIC GLYCEROL-3-PHOSPHATE DEHYDROGENASE SUBUNIT B"/>
    <property type="match status" value="1"/>
</dbReference>
<dbReference type="PANTHER" id="PTHR43400">
    <property type="entry name" value="FUMARATE REDUCTASE"/>
    <property type="match status" value="1"/>
</dbReference>
<dbReference type="Pfam" id="PF00890">
    <property type="entry name" value="FAD_binding_2"/>
    <property type="match status" value="1"/>
</dbReference>
<dbReference type="PIRSF" id="PIRSF000141">
    <property type="entry name" value="Anaerobic_G3P_dh"/>
    <property type="match status" value="1"/>
</dbReference>
<dbReference type="SUPFAM" id="SSF51905">
    <property type="entry name" value="FAD/NAD(P)-binding domain"/>
    <property type="match status" value="1"/>
</dbReference>
<feature type="chain" id="PRO_0000204562" description="Anaerobic glycerol-3-phosphate dehydrogenase subunit B">
    <location>
        <begin position="1"/>
        <end position="426"/>
    </location>
</feature>